<proteinExistence type="inferred from homology"/>
<evidence type="ECO:0000255" key="1">
    <source>
        <dbReference type="HAMAP-Rule" id="MF_01274"/>
    </source>
</evidence>
<gene>
    <name evidence="1" type="primary">coaX</name>
    <name type="ordered locus">Pmob_1772</name>
</gene>
<name>COAX_PETMO</name>
<keyword id="KW-0067">ATP-binding</keyword>
<keyword id="KW-0173">Coenzyme A biosynthesis</keyword>
<keyword id="KW-0963">Cytoplasm</keyword>
<keyword id="KW-0418">Kinase</keyword>
<keyword id="KW-0479">Metal-binding</keyword>
<keyword id="KW-0547">Nucleotide-binding</keyword>
<keyword id="KW-0630">Potassium</keyword>
<keyword id="KW-0808">Transferase</keyword>
<accession>A9BIX4</accession>
<feature type="chain" id="PRO_1000085857" description="Type III pantothenate kinase">
    <location>
        <begin position="1"/>
        <end position="255"/>
    </location>
</feature>
<feature type="active site" description="Proton acceptor" evidence="1">
    <location>
        <position position="109"/>
    </location>
</feature>
<feature type="binding site" evidence="1">
    <location>
        <begin position="6"/>
        <end position="13"/>
    </location>
    <ligand>
        <name>ATP</name>
        <dbReference type="ChEBI" id="CHEBI:30616"/>
    </ligand>
</feature>
<feature type="binding site" evidence="1">
    <location>
        <begin position="107"/>
        <end position="110"/>
    </location>
    <ligand>
        <name>substrate</name>
    </ligand>
</feature>
<feature type="binding site" evidence="1">
    <location>
        <position position="129"/>
    </location>
    <ligand>
        <name>K(+)</name>
        <dbReference type="ChEBI" id="CHEBI:29103"/>
    </ligand>
</feature>
<feature type="binding site" evidence="1">
    <location>
        <position position="132"/>
    </location>
    <ligand>
        <name>ATP</name>
        <dbReference type="ChEBI" id="CHEBI:30616"/>
    </ligand>
</feature>
<feature type="binding site" evidence="1">
    <location>
        <position position="183"/>
    </location>
    <ligand>
        <name>substrate</name>
    </ligand>
</feature>
<dbReference type="EC" id="2.7.1.33" evidence="1"/>
<dbReference type="EMBL" id="CP000879">
    <property type="protein sequence ID" value="ABX32462.1"/>
    <property type="molecule type" value="Genomic_DNA"/>
</dbReference>
<dbReference type="RefSeq" id="WP_012209559.1">
    <property type="nucleotide sequence ID" value="NC_010003.1"/>
</dbReference>
<dbReference type="SMR" id="A9BIX4"/>
<dbReference type="STRING" id="403833.Pmob_1772"/>
<dbReference type="KEGG" id="pmo:Pmob_1772"/>
<dbReference type="eggNOG" id="COG1521">
    <property type="taxonomic scope" value="Bacteria"/>
</dbReference>
<dbReference type="HOGENOM" id="CLU_066627_1_1_0"/>
<dbReference type="OrthoDB" id="9804707at2"/>
<dbReference type="UniPathway" id="UPA00241">
    <property type="reaction ID" value="UER00352"/>
</dbReference>
<dbReference type="Proteomes" id="UP000000789">
    <property type="component" value="Chromosome"/>
</dbReference>
<dbReference type="GO" id="GO:0005737">
    <property type="term" value="C:cytoplasm"/>
    <property type="evidence" value="ECO:0007669"/>
    <property type="project" value="UniProtKB-SubCell"/>
</dbReference>
<dbReference type="GO" id="GO:0005524">
    <property type="term" value="F:ATP binding"/>
    <property type="evidence" value="ECO:0007669"/>
    <property type="project" value="UniProtKB-UniRule"/>
</dbReference>
<dbReference type="GO" id="GO:0046872">
    <property type="term" value="F:metal ion binding"/>
    <property type="evidence" value="ECO:0007669"/>
    <property type="project" value="UniProtKB-KW"/>
</dbReference>
<dbReference type="GO" id="GO:0004594">
    <property type="term" value="F:pantothenate kinase activity"/>
    <property type="evidence" value="ECO:0007669"/>
    <property type="project" value="UniProtKB-UniRule"/>
</dbReference>
<dbReference type="GO" id="GO:0015937">
    <property type="term" value="P:coenzyme A biosynthetic process"/>
    <property type="evidence" value="ECO:0007669"/>
    <property type="project" value="UniProtKB-UniRule"/>
</dbReference>
<dbReference type="CDD" id="cd24015">
    <property type="entry name" value="ASKHA_NBD_PanK-III"/>
    <property type="match status" value="1"/>
</dbReference>
<dbReference type="Gene3D" id="3.30.420.40">
    <property type="match status" value="2"/>
</dbReference>
<dbReference type="HAMAP" id="MF_01274">
    <property type="entry name" value="Pantothen_kinase_3"/>
    <property type="match status" value="1"/>
</dbReference>
<dbReference type="InterPro" id="IPR043129">
    <property type="entry name" value="ATPase_NBD"/>
</dbReference>
<dbReference type="InterPro" id="IPR004619">
    <property type="entry name" value="Type_III_PanK"/>
</dbReference>
<dbReference type="NCBIfam" id="TIGR00671">
    <property type="entry name" value="baf"/>
    <property type="match status" value="1"/>
</dbReference>
<dbReference type="NCBIfam" id="NF009848">
    <property type="entry name" value="PRK13318.1-6"/>
    <property type="match status" value="1"/>
</dbReference>
<dbReference type="PANTHER" id="PTHR34265">
    <property type="entry name" value="TYPE III PANTOTHENATE KINASE"/>
    <property type="match status" value="1"/>
</dbReference>
<dbReference type="PANTHER" id="PTHR34265:SF1">
    <property type="entry name" value="TYPE III PANTOTHENATE KINASE"/>
    <property type="match status" value="1"/>
</dbReference>
<dbReference type="Pfam" id="PF03309">
    <property type="entry name" value="Pan_kinase"/>
    <property type="match status" value="1"/>
</dbReference>
<dbReference type="SUPFAM" id="SSF53067">
    <property type="entry name" value="Actin-like ATPase domain"/>
    <property type="match status" value="2"/>
</dbReference>
<protein>
    <recommendedName>
        <fullName evidence="1">Type III pantothenate kinase</fullName>
        <ecNumber evidence="1">2.7.1.33</ecNumber>
    </recommendedName>
    <alternativeName>
        <fullName evidence="1">PanK-III</fullName>
    </alternativeName>
    <alternativeName>
        <fullName evidence="1">Pantothenic acid kinase</fullName>
    </alternativeName>
</protein>
<organism>
    <name type="scientific">Petrotoga mobilis (strain DSM 10674 / SJ95)</name>
    <dbReference type="NCBI Taxonomy" id="403833"/>
    <lineage>
        <taxon>Bacteria</taxon>
        <taxon>Thermotogati</taxon>
        <taxon>Thermotogota</taxon>
        <taxon>Thermotogae</taxon>
        <taxon>Petrotogales</taxon>
        <taxon>Petrotogaceae</taxon>
        <taxon>Petrotoga</taxon>
    </lineage>
</organism>
<comment type="function">
    <text evidence="1">Catalyzes the phosphorylation of pantothenate (Pan), the first step in CoA biosynthesis.</text>
</comment>
<comment type="catalytic activity">
    <reaction evidence="1">
        <text>(R)-pantothenate + ATP = (R)-4'-phosphopantothenate + ADP + H(+)</text>
        <dbReference type="Rhea" id="RHEA:16373"/>
        <dbReference type="ChEBI" id="CHEBI:10986"/>
        <dbReference type="ChEBI" id="CHEBI:15378"/>
        <dbReference type="ChEBI" id="CHEBI:29032"/>
        <dbReference type="ChEBI" id="CHEBI:30616"/>
        <dbReference type="ChEBI" id="CHEBI:456216"/>
        <dbReference type="EC" id="2.7.1.33"/>
    </reaction>
</comment>
<comment type="cofactor">
    <cofactor evidence="1">
        <name>NH4(+)</name>
        <dbReference type="ChEBI" id="CHEBI:28938"/>
    </cofactor>
    <cofactor evidence="1">
        <name>K(+)</name>
        <dbReference type="ChEBI" id="CHEBI:29103"/>
    </cofactor>
    <text evidence="1">A monovalent cation. Ammonium or potassium.</text>
</comment>
<comment type="pathway">
    <text evidence="1">Cofactor biosynthesis; coenzyme A biosynthesis; CoA from (R)-pantothenate: step 1/5.</text>
</comment>
<comment type="subunit">
    <text evidence="1">Homodimer.</text>
</comment>
<comment type="subcellular location">
    <subcellularLocation>
        <location evidence="1">Cytoplasm</location>
    </subcellularLocation>
</comment>
<comment type="similarity">
    <text evidence="1">Belongs to the type III pantothenate kinase family.</text>
</comment>
<reference key="1">
    <citation type="submission" date="2007-11" db="EMBL/GenBank/DDBJ databases">
        <title>Complete sequence of Petroga mobilis SJ95.</title>
        <authorList>
            <consortium name="US DOE Joint Genome Institute"/>
            <person name="Copeland A."/>
            <person name="Lucas S."/>
            <person name="Lapidus A."/>
            <person name="Barry K."/>
            <person name="Glavina del Rio T."/>
            <person name="Dalin E."/>
            <person name="Tice H."/>
            <person name="Pitluck S."/>
            <person name="Meincke L."/>
            <person name="Brettin T."/>
            <person name="Bruce D."/>
            <person name="Detter J.C."/>
            <person name="Han C."/>
            <person name="Kuske C.R."/>
            <person name="Schmutz J."/>
            <person name="Larimer F."/>
            <person name="Land M."/>
            <person name="Hauser L."/>
            <person name="Kyrpides N."/>
            <person name="Mikhailova N."/>
            <person name="Noll K."/>
            <person name="Richardson P."/>
        </authorList>
    </citation>
    <scope>NUCLEOTIDE SEQUENCE [LARGE SCALE GENOMIC DNA]</scope>
    <source>
        <strain>DSM 10674 / SJ95</strain>
    </source>
</reference>
<sequence>MELLFDVGNSYTMVGIHQDGKFLTWRIGPSSFESEDGLFVIISNLLNRVNVDLNKITLAGISSVVPNVNFILEQMLKKYFNVEIIFVGTKNKINNIAYLVDYPKEVGADRICNVIACKQEYGDNVIALDFGTAITVDVLEGGNFVGGAIIPGFKTAIGALFSRTAQLPKVEIKIPEYHLGKNTIDNIQIGVIKTTLYGIERLIDEIKRERNKDFVVVATGGDMSFLSSKISIFKHYDPYLTLKGILYYSKEIKKL</sequence>